<sequence length="197" mass="22584">MEVSMDLIKKLREMTGAGVLDCKKALEESEGDIEKAVEILRKKGAATAEKKAGRATKEGIIVAYVHFNGRIGVLLEMNCETDFVARTDEFKELAYNLAKQVAAMKPRYVRREDVPEEVIEKEKEIYRAQIKDKPEHVIEKIVEGKLEKFFEQACLYEQTYIFDDSKKVKDLINELIAKTGENIRVSRFTRYEVGEEG</sequence>
<proteinExistence type="inferred from homology"/>
<comment type="function">
    <text evidence="1">Associates with the EF-Tu.GDP complex and induces the exchange of GDP to GTP. It remains bound to the aminoacyl-tRNA.EF-Tu.GTP complex up to the GTP hydrolysis stage on the ribosome.</text>
</comment>
<comment type="subcellular location">
    <subcellularLocation>
        <location evidence="1">Cytoplasm</location>
    </subcellularLocation>
</comment>
<comment type="similarity">
    <text evidence="1">Belongs to the EF-Ts family.</text>
</comment>
<reference key="1">
    <citation type="submission" date="2007-11" db="EMBL/GenBank/DDBJ databases">
        <title>The genome sequence of the hyperthermophilic bacterium Thermotoga neapolitana.</title>
        <authorList>
            <person name="Lim S.K."/>
            <person name="Kim J.S."/>
            <person name="Cha S.H."/>
            <person name="Park B.C."/>
            <person name="Lee D.S."/>
            <person name="Tae H.S."/>
            <person name="Kim S.-J."/>
            <person name="Kim J.J."/>
            <person name="Park K.J."/>
            <person name="Lee S.Y."/>
        </authorList>
    </citation>
    <scope>NUCLEOTIDE SEQUENCE [LARGE SCALE GENOMIC DNA]</scope>
    <source>
        <strain>ATCC 49049 / DSM 4359 / NBRC 107923 / NS-E</strain>
    </source>
</reference>
<protein>
    <recommendedName>
        <fullName evidence="1">Elongation factor Ts</fullName>
        <shortName evidence="1">EF-Ts</shortName>
    </recommendedName>
</protein>
<keyword id="KW-0963">Cytoplasm</keyword>
<keyword id="KW-0251">Elongation factor</keyword>
<keyword id="KW-0648">Protein biosynthesis</keyword>
<organism>
    <name type="scientific">Thermotoga neapolitana (strain ATCC 49049 / DSM 4359 / NBRC 107923 / NS-E)</name>
    <dbReference type="NCBI Taxonomy" id="309803"/>
    <lineage>
        <taxon>Bacteria</taxon>
        <taxon>Thermotogati</taxon>
        <taxon>Thermotogota</taxon>
        <taxon>Thermotogae</taxon>
        <taxon>Thermotogales</taxon>
        <taxon>Thermotogaceae</taxon>
        <taxon>Thermotoga</taxon>
    </lineage>
</organism>
<dbReference type="EMBL" id="CP000916">
    <property type="protein sequence ID" value="ACM23029.1"/>
    <property type="molecule type" value="Genomic_DNA"/>
</dbReference>
<dbReference type="RefSeq" id="WP_015919346.1">
    <property type="nucleotide sequence ID" value="NC_011978.1"/>
</dbReference>
<dbReference type="SMR" id="B9K7U6"/>
<dbReference type="STRING" id="309803.CTN_0853"/>
<dbReference type="KEGG" id="tna:CTN_0853"/>
<dbReference type="eggNOG" id="COG0264">
    <property type="taxonomic scope" value="Bacteria"/>
</dbReference>
<dbReference type="HOGENOM" id="CLU_047155_1_1_0"/>
<dbReference type="Proteomes" id="UP000000445">
    <property type="component" value="Chromosome"/>
</dbReference>
<dbReference type="GO" id="GO:0005737">
    <property type="term" value="C:cytoplasm"/>
    <property type="evidence" value="ECO:0007669"/>
    <property type="project" value="UniProtKB-SubCell"/>
</dbReference>
<dbReference type="GO" id="GO:0003746">
    <property type="term" value="F:translation elongation factor activity"/>
    <property type="evidence" value="ECO:0007669"/>
    <property type="project" value="UniProtKB-UniRule"/>
</dbReference>
<dbReference type="CDD" id="cd14275">
    <property type="entry name" value="UBA_EF-Ts"/>
    <property type="match status" value="1"/>
</dbReference>
<dbReference type="FunFam" id="1.10.286.20:FF:000001">
    <property type="entry name" value="Elongation factor Ts"/>
    <property type="match status" value="1"/>
</dbReference>
<dbReference type="FunFam" id="1.10.8.10:FF:000001">
    <property type="entry name" value="Elongation factor Ts"/>
    <property type="match status" value="1"/>
</dbReference>
<dbReference type="Gene3D" id="1.10.286.20">
    <property type="match status" value="1"/>
</dbReference>
<dbReference type="Gene3D" id="1.10.8.10">
    <property type="entry name" value="DNA helicase RuvA subunit, C-terminal domain"/>
    <property type="match status" value="1"/>
</dbReference>
<dbReference type="Gene3D" id="3.30.479.20">
    <property type="entry name" value="Elongation factor Ts, dimerisation domain"/>
    <property type="match status" value="1"/>
</dbReference>
<dbReference type="HAMAP" id="MF_00050">
    <property type="entry name" value="EF_Ts"/>
    <property type="match status" value="1"/>
</dbReference>
<dbReference type="InterPro" id="IPR036402">
    <property type="entry name" value="EF-Ts_dimer_sf"/>
</dbReference>
<dbReference type="InterPro" id="IPR001816">
    <property type="entry name" value="Transl_elong_EFTs/EF1B"/>
</dbReference>
<dbReference type="InterPro" id="IPR014039">
    <property type="entry name" value="Transl_elong_EFTs/EF1B_dimer"/>
</dbReference>
<dbReference type="InterPro" id="IPR018101">
    <property type="entry name" value="Transl_elong_Ts_CS"/>
</dbReference>
<dbReference type="InterPro" id="IPR009060">
    <property type="entry name" value="UBA-like_sf"/>
</dbReference>
<dbReference type="NCBIfam" id="TIGR00116">
    <property type="entry name" value="tsf"/>
    <property type="match status" value="1"/>
</dbReference>
<dbReference type="PANTHER" id="PTHR11741">
    <property type="entry name" value="ELONGATION FACTOR TS"/>
    <property type="match status" value="1"/>
</dbReference>
<dbReference type="PANTHER" id="PTHR11741:SF0">
    <property type="entry name" value="ELONGATION FACTOR TS, MITOCHONDRIAL"/>
    <property type="match status" value="1"/>
</dbReference>
<dbReference type="Pfam" id="PF00889">
    <property type="entry name" value="EF_TS"/>
    <property type="match status" value="1"/>
</dbReference>
<dbReference type="SUPFAM" id="SSF54713">
    <property type="entry name" value="Elongation factor Ts (EF-Ts), dimerisation domain"/>
    <property type="match status" value="1"/>
</dbReference>
<dbReference type="SUPFAM" id="SSF46934">
    <property type="entry name" value="UBA-like"/>
    <property type="match status" value="1"/>
</dbReference>
<dbReference type="PROSITE" id="PS01126">
    <property type="entry name" value="EF_TS_1"/>
    <property type="match status" value="1"/>
</dbReference>
<dbReference type="PROSITE" id="PS01127">
    <property type="entry name" value="EF_TS_2"/>
    <property type="match status" value="1"/>
</dbReference>
<evidence type="ECO:0000255" key="1">
    <source>
        <dbReference type="HAMAP-Rule" id="MF_00050"/>
    </source>
</evidence>
<name>EFTS_THENN</name>
<gene>
    <name evidence="1" type="primary">tsf</name>
    <name type="ordered locus">CTN_0853</name>
</gene>
<accession>B9K7U6</accession>
<feature type="chain" id="PRO_1000189895" description="Elongation factor Ts">
    <location>
        <begin position="1"/>
        <end position="197"/>
    </location>
</feature>
<feature type="region of interest" description="Involved in Mg(2+) ion dislocation from EF-Tu" evidence="1">
    <location>
        <begin position="81"/>
        <end position="84"/>
    </location>
</feature>